<organism>
    <name type="scientific">Cytophaga hutchinsonii (strain ATCC 33406 / DSM 1761 / CIP 103989 / NBRC 15051 / NCIMB 9469 / D465)</name>
    <dbReference type="NCBI Taxonomy" id="269798"/>
    <lineage>
        <taxon>Bacteria</taxon>
        <taxon>Pseudomonadati</taxon>
        <taxon>Bacteroidota</taxon>
        <taxon>Cytophagia</taxon>
        <taxon>Cytophagales</taxon>
        <taxon>Cytophagaceae</taxon>
        <taxon>Cytophaga</taxon>
    </lineage>
</organism>
<gene>
    <name evidence="1" type="primary">guaA</name>
    <name type="ordered locus">CHU_0934</name>
</gene>
<keyword id="KW-0067">ATP-binding</keyword>
<keyword id="KW-0315">Glutamine amidotransferase</keyword>
<keyword id="KW-0332">GMP biosynthesis</keyword>
<keyword id="KW-0436">Ligase</keyword>
<keyword id="KW-0547">Nucleotide-binding</keyword>
<keyword id="KW-0658">Purine biosynthesis</keyword>
<keyword id="KW-1185">Reference proteome</keyword>
<accession>Q11WK3</accession>
<evidence type="ECO:0000255" key="1">
    <source>
        <dbReference type="HAMAP-Rule" id="MF_00344"/>
    </source>
</evidence>
<feature type="chain" id="PRO_1000120273" description="GMP synthase [glutamine-hydrolyzing]">
    <location>
        <begin position="1"/>
        <end position="509"/>
    </location>
</feature>
<feature type="domain" description="Glutamine amidotransferase type-1" evidence="1">
    <location>
        <begin position="4"/>
        <end position="193"/>
    </location>
</feature>
<feature type="domain" description="GMPS ATP-PPase" evidence="1">
    <location>
        <begin position="194"/>
        <end position="384"/>
    </location>
</feature>
<feature type="active site" description="Nucleophile" evidence="1">
    <location>
        <position position="79"/>
    </location>
</feature>
<feature type="active site" evidence="1">
    <location>
        <position position="167"/>
    </location>
</feature>
<feature type="active site" evidence="1">
    <location>
        <position position="169"/>
    </location>
</feature>
<feature type="binding site" evidence="1">
    <location>
        <begin position="221"/>
        <end position="227"/>
    </location>
    <ligand>
        <name>ATP</name>
        <dbReference type="ChEBI" id="CHEBI:30616"/>
    </ligand>
</feature>
<protein>
    <recommendedName>
        <fullName evidence="1">GMP synthase [glutamine-hydrolyzing]</fullName>
        <ecNumber evidence="1">6.3.5.2</ecNumber>
    </recommendedName>
    <alternativeName>
        <fullName evidence="1">GMP synthetase</fullName>
    </alternativeName>
    <alternativeName>
        <fullName evidence="1">Glutamine amidotransferase</fullName>
    </alternativeName>
</protein>
<sequence>MTEKILILDFGSQYTQLIARRVRELNVYCEIHPYNKAPQIDGTVKGVILSGSPCSVREENAPDIDLSLYREKLPLLGVCYGAQLIAHKSGGTVQPSSIREYGRARLNNVHTSDDLFKEIVPDSQVWMSHGDTIVEIPSNFEILSSTETVRVAAYKVKGEDTFGIQFHPEVTHSLQGKELLRNFVVHICGCSQDWTPDAFVETTISELKAKIGTDKVVLGLSGGVDSSVAAVLIHKAIGPNLTCIFVDNGLLRKNEYEEVLNSYKHMGLNVIGVDAKKQFYKSLEGLSDPEAKRKAIGKEFIEVFDQESHKIADVKWLGQGTIYPDIIESVSVKGPSATIKSHHNVGGLPEKMKLKIVEPLNTLFKDEVRRVGKTLGIDDIILKRHPFPGPGLAIRILGDITAEKVAVLQEVDYIFISRLKEKGLYDQVWQAGAILLPVKSVGVMGDERTYENVVALRAVSSMDGMTADWIHLPYDFLADISNEIINRVKGVNRVVYDISSKPPATIEWE</sequence>
<reference key="1">
    <citation type="journal article" date="2007" name="Appl. Environ. Microbiol.">
        <title>Genome sequence of the cellulolytic gliding bacterium Cytophaga hutchinsonii.</title>
        <authorList>
            <person name="Xie G."/>
            <person name="Bruce D.C."/>
            <person name="Challacombe J.F."/>
            <person name="Chertkov O."/>
            <person name="Detter J.C."/>
            <person name="Gilna P."/>
            <person name="Han C.S."/>
            <person name="Lucas S."/>
            <person name="Misra M."/>
            <person name="Myers G.L."/>
            <person name="Richardson P."/>
            <person name="Tapia R."/>
            <person name="Thayer N."/>
            <person name="Thompson L.S."/>
            <person name="Brettin T.S."/>
            <person name="Henrissat B."/>
            <person name="Wilson D.B."/>
            <person name="McBride M.J."/>
        </authorList>
    </citation>
    <scope>NUCLEOTIDE SEQUENCE [LARGE SCALE GENOMIC DNA]</scope>
    <source>
        <strain>ATCC 33406 / DSM 1761 / JCM 20678 / CIP 103989 / IAM 12607 / NBRC 15051 / NCIMB 9469 / D465</strain>
    </source>
</reference>
<comment type="function">
    <text evidence="1">Catalyzes the synthesis of GMP from XMP.</text>
</comment>
<comment type="catalytic activity">
    <reaction evidence="1">
        <text>XMP + L-glutamine + ATP + H2O = GMP + L-glutamate + AMP + diphosphate + 2 H(+)</text>
        <dbReference type="Rhea" id="RHEA:11680"/>
        <dbReference type="ChEBI" id="CHEBI:15377"/>
        <dbReference type="ChEBI" id="CHEBI:15378"/>
        <dbReference type="ChEBI" id="CHEBI:29985"/>
        <dbReference type="ChEBI" id="CHEBI:30616"/>
        <dbReference type="ChEBI" id="CHEBI:33019"/>
        <dbReference type="ChEBI" id="CHEBI:57464"/>
        <dbReference type="ChEBI" id="CHEBI:58115"/>
        <dbReference type="ChEBI" id="CHEBI:58359"/>
        <dbReference type="ChEBI" id="CHEBI:456215"/>
        <dbReference type="EC" id="6.3.5.2"/>
    </reaction>
</comment>
<comment type="pathway">
    <text evidence="1">Purine metabolism; GMP biosynthesis; GMP from XMP (L-Gln route): step 1/1.</text>
</comment>
<comment type="subunit">
    <text evidence="1">Homodimer.</text>
</comment>
<proteinExistence type="inferred from homology"/>
<name>GUAA_CYTH3</name>
<dbReference type="EC" id="6.3.5.2" evidence="1"/>
<dbReference type="EMBL" id="CP000383">
    <property type="protein sequence ID" value="ABG58213.1"/>
    <property type="molecule type" value="Genomic_DNA"/>
</dbReference>
<dbReference type="RefSeq" id="WP_011584328.1">
    <property type="nucleotide sequence ID" value="NC_008255.1"/>
</dbReference>
<dbReference type="SMR" id="Q11WK3"/>
<dbReference type="STRING" id="269798.CHU_0934"/>
<dbReference type="KEGG" id="chu:CHU_0934"/>
<dbReference type="eggNOG" id="COG0518">
    <property type="taxonomic scope" value="Bacteria"/>
</dbReference>
<dbReference type="eggNOG" id="COG0519">
    <property type="taxonomic scope" value="Bacteria"/>
</dbReference>
<dbReference type="HOGENOM" id="CLU_014340_0_5_10"/>
<dbReference type="OrthoDB" id="9802219at2"/>
<dbReference type="UniPathway" id="UPA00189">
    <property type="reaction ID" value="UER00296"/>
</dbReference>
<dbReference type="Proteomes" id="UP000001822">
    <property type="component" value="Chromosome"/>
</dbReference>
<dbReference type="GO" id="GO:0005829">
    <property type="term" value="C:cytosol"/>
    <property type="evidence" value="ECO:0007669"/>
    <property type="project" value="TreeGrafter"/>
</dbReference>
<dbReference type="GO" id="GO:0005524">
    <property type="term" value="F:ATP binding"/>
    <property type="evidence" value="ECO:0007669"/>
    <property type="project" value="UniProtKB-UniRule"/>
</dbReference>
<dbReference type="GO" id="GO:0003921">
    <property type="term" value="F:GMP synthase activity"/>
    <property type="evidence" value="ECO:0007669"/>
    <property type="project" value="InterPro"/>
</dbReference>
<dbReference type="CDD" id="cd01742">
    <property type="entry name" value="GATase1_GMP_Synthase"/>
    <property type="match status" value="1"/>
</dbReference>
<dbReference type="CDD" id="cd01997">
    <property type="entry name" value="GMP_synthase_C"/>
    <property type="match status" value="1"/>
</dbReference>
<dbReference type="FunFam" id="3.30.300.10:FF:000002">
    <property type="entry name" value="GMP synthase [glutamine-hydrolyzing]"/>
    <property type="match status" value="1"/>
</dbReference>
<dbReference type="FunFam" id="3.40.50.620:FF:000001">
    <property type="entry name" value="GMP synthase [glutamine-hydrolyzing]"/>
    <property type="match status" value="1"/>
</dbReference>
<dbReference type="FunFam" id="3.40.50.880:FF:000001">
    <property type="entry name" value="GMP synthase [glutamine-hydrolyzing]"/>
    <property type="match status" value="1"/>
</dbReference>
<dbReference type="Gene3D" id="3.30.300.10">
    <property type="match status" value="1"/>
</dbReference>
<dbReference type="Gene3D" id="3.40.50.880">
    <property type="match status" value="1"/>
</dbReference>
<dbReference type="Gene3D" id="3.40.50.620">
    <property type="entry name" value="HUPs"/>
    <property type="match status" value="1"/>
</dbReference>
<dbReference type="HAMAP" id="MF_00344">
    <property type="entry name" value="GMP_synthase"/>
    <property type="match status" value="1"/>
</dbReference>
<dbReference type="InterPro" id="IPR029062">
    <property type="entry name" value="Class_I_gatase-like"/>
</dbReference>
<dbReference type="InterPro" id="IPR017926">
    <property type="entry name" value="GATASE"/>
</dbReference>
<dbReference type="InterPro" id="IPR001674">
    <property type="entry name" value="GMP_synth_C"/>
</dbReference>
<dbReference type="InterPro" id="IPR004739">
    <property type="entry name" value="GMP_synth_GATase"/>
</dbReference>
<dbReference type="InterPro" id="IPR022955">
    <property type="entry name" value="GMP_synthase"/>
</dbReference>
<dbReference type="InterPro" id="IPR025777">
    <property type="entry name" value="GMPS_ATP_PPase_dom"/>
</dbReference>
<dbReference type="InterPro" id="IPR022310">
    <property type="entry name" value="NAD/GMP_synthase"/>
</dbReference>
<dbReference type="InterPro" id="IPR014729">
    <property type="entry name" value="Rossmann-like_a/b/a_fold"/>
</dbReference>
<dbReference type="NCBIfam" id="TIGR00884">
    <property type="entry name" value="guaA_Cterm"/>
    <property type="match status" value="1"/>
</dbReference>
<dbReference type="NCBIfam" id="TIGR00888">
    <property type="entry name" value="guaA_Nterm"/>
    <property type="match status" value="1"/>
</dbReference>
<dbReference type="NCBIfam" id="NF000848">
    <property type="entry name" value="PRK00074.1"/>
    <property type="match status" value="1"/>
</dbReference>
<dbReference type="PANTHER" id="PTHR11922:SF2">
    <property type="entry name" value="GMP SYNTHASE [GLUTAMINE-HYDROLYZING]"/>
    <property type="match status" value="1"/>
</dbReference>
<dbReference type="PANTHER" id="PTHR11922">
    <property type="entry name" value="GMP SYNTHASE-RELATED"/>
    <property type="match status" value="1"/>
</dbReference>
<dbReference type="Pfam" id="PF00117">
    <property type="entry name" value="GATase"/>
    <property type="match status" value="1"/>
</dbReference>
<dbReference type="Pfam" id="PF00958">
    <property type="entry name" value="GMP_synt_C"/>
    <property type="match status" value="1"/>
</dbReference>
<dbReference type="Pfam" id="PF02540">
    <property type="entry name" value="NAD_synthase"/>
    <property type="match status" value="1"/>
</dbReference>
<dbReference type="PRINTS" id="PR00096">
    <property type="entry name" value="GATASE"/>
</dbReference>
<dbReference type="SUPFAM" id="SSF52402">
    <property type="entry name" value="Adenine nucleotide alpha hydrolases-like"/>
    <property type="match status" value="1"/>
</dbReference>
<dbReference type="SUPFAM" id="SSF52317">
    <property type="entry name" value="Class I glutamine amidotransferase-like"/>
    <property type="match status" value="1"/>
</dbReference>
<dbReference type="SUPFAM" id="SSF54810">
    <property type="entry name" value="GMP synthetase C-terminal dimerisation domain"/>
    <property type="match status" value="1"/>
</dbReference>
<dbReference type="PROSITE" id="PS51273">
    <property type="entry name" value="GATASE_TYPE_1"/>
    <property type="match status" value="1"/>
</dbReference>
<dbReference type="PROSITE" id="PS51553">
    <property type="entry name" value="GMPS_ATP_PPASE"/>
    <property type="match status" value="1"/>
</dbReference>